<feature type="chain" id="PRO_0000250107" description="3-isopropylmalate dehydrogenase">
    <location>
        <begin position="1"/>
        <end position="355"/>
    </location>
</feature>
<feature type="binding site" evidence="1">
    <location>
        <position position="90"/>
    </location>
    <ligand>
        <name>substrate</name>
    </ligand>
</feature>
<feature type="binding site" evidence="1">
    <location>
        <position position="100"/>
    </location>
    <ligand>
        <name>substrate</name>
    </ligand>
</feature>
<feature type="binding site" evidence="1">
    <location>
        <position position="128"/>
    </location>
    <ligand>
        <name>substrate</name>
    </ligand>
</feature>
<feature type="binding site" evidence="1">
    <location>
        <position position="222"/>
    </location>
    <ligand>
        <name>Mg(2+)</name>
        <dbReference type="ChEBI" id="CHEBI:18420"/>
    </ligand>
</feature>
<feature type="binding site" evidence="1">
    <location>
        <position position="222"/>
    </location>
    <ligand>
        <name>substrate</name>
    </ligand>
</feature>
<feature type="binding site" evidence="1">
    <location>
        <position position="246"/>
    </location>
    <ligand>
        <name>Mg(2+)</name>
        <dbReference type="ChEBI" id="CHEBI:18420"/>
    </ligand>
</feature>
<feature type="binding site" evidence="1">
    <location>
        <position position="250"/>
    </location>
    <ligand>
        <name>Mg(2+)</name>
        <dbReference type="ChEBI" id="CHEBI:18420"/>
    </ligand>
</feature>
<feature type="binding site" evidence="1">
    <location>
        <begin position="280"/>
        <end position="292"/>
    </location>
    <ligand>
        <name>NAD(+)</name>
        <dbReference type="ChEBI" id="CHEBI:57540"/>
    </ligand>
</feature>
<feature type="site" description="Important for catalysis" evidence="1">
    <location>
        <position position="135"/>
    </location>
</feature>
<feature type="site" description="Important for catalysis" evidence="1">
    <location>
        <position position="190"/>
    </location>
</feature>
<organism>
    <name type="scientific">Burkholderia pseudomallei (strain 1710b)</name>
    <dbReference type="NCBI Taxonomy" id="320372"/>
    <lineage>
        <taxon>Bacteria</taxon>
        <taxon>Pseudomonadati</taxon>
        <taxon>Pseudomonadota</taxon>
        <taxon>Betaproteobacteria</taxon>
        <taxon>Burkholderiales</taxon>
        <taxon>Burkholderiaceae</taxon>
        <taxon>Burkholderia</taxon>
        <taxon>pseudomallei group</taxon>
    </lineage>
</organism>
<dbReference type="EC" id="1.1.1.85" evidence="1"/>
<dbReference type="EMBL" id="CP000125">
    <property type="protein sequence ID" value="ABA53170.1"/>
    <property type="molecule type" value="Genomic_DNA"/>
</dbReference>
<dbReference type="RefSeq" id="WP_004187693.1">
    <property type="nucleotide sequence ID" value="NC_007435.1"/>
</dbReference>
<dbReference type="SMR" id="Q3JKG9"/>
<dbReference type="EnsemblBacteria" id="ABA53170">
    <property type="protein sequence ID" value="ABA53170"/>
    <property type="gene ID" value="BURPS1710b_A0775"/>
</dbReference>
<dbReference type="GeneID" id="93063903"/>
<dbReference type="KEGG" id="bpm:BURPS1710b_A0775"/>
<dbReference type="HOGENOM" id="CLU_031953_0_3_4"/>
<dbReference type="UniPathway" id="UPA00048">
    <property type="reaction ID" value="UER00072"/>
</dbReference>
<dbReference type="Proteomes" id="UP000002700">
    <property type="component" value="Chromosome II"/>
</dbReference>
<dbReference type="GO" id="GO:0005829">
    <property type="term" value="C:cytosol"/>
    <property type="evidence" value="ECO:0007669"/>
    <property type="project" value="TreeGrafter"/>
</dbReference>
<dbReference type="GO" id="GO:0003862">
    <property type="term" value="F:3-isopropylmalate dehydrogenase activity"/>
    <property type="evidence" value="ECO:0007669"/>
    <property type="project" value="UniProtKB-UniRule"/>
</dbReference>
<dbReference type="GO" id="GO:0000287">
    <property type="term" value="F:magnesium ion binding"/>
    <property type="evidence" value="ECO:0007669"/>
    <property type="project" value="InterPro"/>
</dbReference>
<dbReference type="GO" id="GO:0051287">
    <property type="term" value="F:NAD binding"/>
    <property type="evidence" value="ECO:0007669"/>
    <property type="project" value="InterPro"/>
</dbReference>
<dbReference type="GO" id="GO:0009098">
    <property type="term" value="P:L-leucine biosynthetic process"/>
    <property type="evidence" value="ECO:0007669"/>
    <property type="project" value="UniProtKB-UniRule"/>
</dbReference>
<dbReference type="FunFam" id="3.40.718.10:FF:000028">
    <property type="entry name" value="3-isopropylmalate dehydrogenase"/>
    <property type="match status" value="1"/>
</dbReference>
<dbReference type="Gene3D" id="3.40.718.10">
    <property type="entry name" value="Isopropylmalate Dehydrogenase"/>
    <property type="match status" value="1"/>
</dbReference>
<dbReference type="HAMAP" id="MF_01033">
    <property type="entry name" value="LeuB_type1"/>
    <property type="match status" value="1"/>
</dbReference>
<dbReference type="InterPro" id="IPR019818">
    <property type="entry name" value="IsoCit/isopropylmalate_DH_CS"/>
</dbReference>
<dbReference type="InterPro" id="IPR024084">
    <property type="entry name" value="IsoPropMal-DH-like_dom"/>
</dbReference>
<dbReference type="InterPro" id="IPR004429">
    <property type="entry name" value="Isopropylmalate_DH"/>
</dbReference>
<dbReference type="NCBIfam" id="TIGR00169">
    <property type="entry name" value="leuB"/>
    <property type="match status" value="1"/>
</dbReference>
<dbReference type="PANTHER" id="PTHR42979">
    <property type="entry name" value="3-ISOPROPYLMALATE DEHYDROGENASE"/>
    <property type="match status" value="1"/>
</dbReference>
<dbReference type="PANTHER" id="PTHR42979:SF1">
    <property type="entry name" value="3-ISOPROPYLMALATE DEHYDROGENASE"/>
    <property type="match status" value="1"/>
</dbReference>
<dbReference type="Pfam" id="PF00180">
    <property type="entry name" value="Iso_dh"/>
    <property type="match status" value="1"/>
</dbReference>
<dbReference type="SMART" id="SM01329">
    <property type="entry name" value="Iso_dh"/>
    <property type="match status" value="1"/>
</dbReference>
<dbReference type="SUPFAM" id="SSF53659">
    <property type="entry name" value="Isocitrate/Isopropylmalate dehydrogenase-like"/>
    <property type="match status" value="1"/>
</dbReference>
<dbReference type="PROSITE" id="PS00470">
    <property type="entry name" value="IDH_IMDH"/>
    <property type="match status" value="1"/>
</dbReference>
<keyword id="KW-0028">Amino-acid biosynthesis</keyword>
<keyword id="KW-0100">Branched-chain amino acid biosynthesis</keyword>
<keyword id="KW-0963">Cytoplasm</keyword>
<keyword id="KW-0432">Leucine biosynthesis</keyword>
<keyword id="KW-0460">Magnesium</keyword>
<keyword id="KW-0464">Manganese</keyword>
<keyword id="KW-0479">Metal-binding</keyword>
<keyword id="KW-0520">NAD</keyword>
<keyword id="KW-0560">Oxidoreductase</keyword>
<gene>
    <name evidence="1" type="primary">leuB</name>
    <name type="ordered locus">BURPS1710b_A0775</name>
</gene>
<reference key="1">
    <citation type="journal article" date="2010" name="Genome Biol. Evol.">
        <title>Continuing evolution of Burkholderia mallei through genome reduction and large-scale rearrangements.</title>
        <authorList>
            <person name="Losada L."/>
            <person name="Ronning C.M."/>
            <person name="DeShazer D."/>
            <person name="Woods D."/>
            <person name="Fedorova N."/>
            <person name="Kim H.S."/>
            <person name="Shabalina S.A."/>
            <person name="Pearson T.R."/>
            <person name="Brinkac L."/>
            <person name="Tan P."/>
            <person name="Nandi T."/>
            <person name="Crabtree J."/>
            <person name="Badger J."/>
            <person name="Beckstrom-Sternberg S."/>
            <person name="Saqib M."/>
            <person name="Schutzer S.E."/>
            <person name="Keim P."/>
            <person name="Nierman W.C."/>
        </authorList>
    </citation>
    <scope>NUCLEOTIDE SEQUENCE [LARGE SCALE GENOMIC DNA]</scope>
    <source>
        <strain>1710b</strain>
    </source>
</reference>
<accession>Q3JKG9</accession>
<comment type="function">
    <text evidence="1">Catalyzes the oxidation of 3-carboxy-2-hydroxy-4-methylpentanoate (3-isopropylmalate) to 3-carboxy-4-methyl-2-oxopentanoate. The product decarboxylates to 4-methyl-2 oxopentanoate.</text>
</comment>
<comment type="catalytic activity">
    <reaction evidence="1">
        <text>(2R,3S)-3-isopropylmalate + NAD(+) = 4-methyl-2-oxopentanoate + CO2 + NADH</text>
        <dbReference type="Rhea" id="RHEA:32271"/>
        <dbReference type="ChEBI" id="CHEBI:16526"/>
        <dbReference type="ChEBI" id="CHEBI:17865"/>
        <dbReference type="ChEBI" id="CHEBI:35121"/>
        <dbReference type="ChEBI" id="CHEBI:57540"/>
        <dbReference type="ChEBI" id="CHEBI:57945"/>
        <dbReference type="EC" id="1.1.1.85"/>
    </reaction>
</comment>
<comment type="cofactor">
    <cofactor evidence="1">
        <name>Mg(2+)</name>
        <dbReference type="ChEBI" id="CHEBI:18420"/>
    </cofactor>
    <cofactor evidence="1">
        <name>Mn(2+)</name>
        <dbReference type="ChEBI" id="CHEBI:29035"/>
    </cofactor>
    <text evidence="1">Binds 1 Mg(2+) or Mn(2+) ion per subunit.</text>
</comment>
<comment type="pathway">
    <text evidence="1">Amino-acid biosynthesis; L-leucine biosynthesis; L-leucine from 3-methyl-2-oxobutanoate: step 3/4.</text>
</comment>
<comment type="subunit">
    <text evidence="1">Homodimer.</text>
</comment>
<comment type="subcellular location">
    <subcellularLocation>
        <location evidence="1">Cytoplasm</location>
    </subcellularLocation>
</comment>
<comment type="similarity">
    <text evidence="1">Belongs to the isocitrate and isopropylmalate dehydrogenases family. LeuB type 1 subfamily.</text>
</comment>
<proteinExistence type="inferred from homology"/>
<protein>
    <recommendedName>
        <fullName evidence="1">3-isopropylmalate dehydrogenase</fullName>
        <ecNumber evidence="1">1.1.1.85</ecNumber>
    </recommendedName>
    <alternativeName>
        <fullName evidence="1">3-IPM-DH</fullName>
    </alternativeName>
    <alternativeName>
        <fullName evidence="1">Beta-IPM dehydrogenase</fullName>
        <shortName evidence="1">IMDH</shortName>
    </alternativeName>
</protein>
<sequence length="355" mass="38187">MKIAVLPGDGIGPEIVNEAVKVLNALDEKFELEQAPVGGAGYEASGHPLPDATLALAKEADAILFGAVGDWKYDSLERALRPEQAILGLRKHLELFANFRPAICYPQLVDASPLKPELVAGLDILIVRELNGDIYFGQPRGVRAAPDGPFAGAREGFDTMRYSEPEVRRIAHVAFQAARKRAKKLLSVDKSNVLETSQFWRDVMIDVSKEYADVELSHMYVDNAAMQLAKAPKQFDVIVTGNMFGDILSDEASMLTGSIGMLPSASLDQRNKGLYEPSHGSAPDIAGKGIANPLATILSAAMLLRYSLNRAEQADRIERAVKAVLEQGYRTGDIATPGCKQVGTAAMGDAVVAAL</sequence>
<evidence type="ECO:0000255" key="1">
    <source>
        <dbReference type="HAMAP-Rule" id="MF_01033"/>
    </source>
</evidence>
<name>LEU3_BURP1</name>